<feature type="chain" id="PRO_0000124306" description="Small ribosomal subunit protein uS7">
    <location>
        <begin position="1"/>
        <end position="156"/>
    </location>
</feature>
<feature type="turn" evidence="3">
    <location>
        <begin position="16"/>
        <end position="18"/>
    </location>
</feature>
<feature type="helix" evidence="3">
    <location>
        <begin position="21"/>
        <end position="30"/>
    </location>
</feature>
<feature type="helix" evidence="3">
    <location>
        <begin position="36"/>
        <end position="54"/>
    </location>
</feature>
<feature type="helix" evidence="3">
    <location>
        <begin position="58"/>
        <end position="69"/>
    </location>
</feature>
<feature type="strand" evidence="3">
    <location>
        <begin position="72"/>
        <end position="80"/>
    </location>
</feature>
<feature type="strand" evidence="3">
    <location>
        <begin position="83"/>
        <end position="90"/>
    </location>
</feature>
<feature type="helix" evidence="3">
    <location>
        <begin position="93"/>
        <end position="108"/>
    </location>
</feature>
<feature type="strand" evidence="3">
    <location>
        <begin position="113"/>
        <end position="115"/>
    </location>
</feature>
<feature type="helix" evidence="3">
    <location>
        <begin position="116"/>
        <end position="128"/>
    </location>
</feature>
<feature type="helix" evidence="3">
    <location>
        <begin position="133"/>
        <end position="147"/>
    </location>
</feature>
<comment type="function">
    <text evidence="1">One of the primary rRNA binding proteins, it binds directly to 16S rRNA where it nucleates assembly of the head domain of the 30S subunit. Is located at the subunit interface close to the decoding center, probably blocks exit of the E-site tRNA.</text>
</comment>
<comment type="subunit">
    <text evidence="1">Part of the 30S ribosomal subunit. Contacts proteins S9 and S11.</text>
</comment>
<comment type="similarity">
    <text evidence="1">Belongs to the universal ribosomal protein uS7 family.</text>
</comment>
<reference key="1">
    <citation type="journal article" date="1998" name="Nature">
        <title>Deciphering the biology of Mycobacterium tuberculosis from the complete genome sequence.</title>
        <authorList>
            <person name="Cole S.T."/>
            <person name="Brosch R."/>
            <person name="Parkhill J."/>
            <person name="Garnier T."/>
            <person name="Churcher C.M."/>
            <person name="Harris D.E."/>
            <person name="Gordon S.V."/>
            <person name="Eiglmeier K."/>
            <person name="Gas S."/>
            <person name="Barry C.E. III"/>
            <person name="Tekaia F."/>
            <person name="Badcock K."/>
            <person name="Basham D."/>
            <person name="Brown D."/>
            <person name="Chillingworth T."/>
            <person name="Connor R."/>
            <person name="Davies R.M."/>
            <person name="Devlin K."/>
            <person name="Feltwell T."/>
            <person name="Gentles S."/>
            <person name="Hamlin N."/>
            <person name="Holroyd S."/>
            <person name="Hornsby T."/>
            <person name="Jagels K."/>
            <person name="Krogh A."/>
            <person name="McLean J."/>
            <person name="Moule S."/>
            <person name="Murphy L.D."/>
            <person name="Oliver S."/>
            <person name="Osborne J."/>
            <person name="Quail M.A."/>
            <person name="Rajandream M.A."/>
            <person name="Rogers J."/>
            <person name="Rutter S."/>
            <person name="Seeger K."/>
            <person name="Skelton S."/>
            <person name="Squares S."/>
            <person name="Squares R."/>
            <person name="Sulston J.E."/>
            <person name="Taylor K."/>
            <person name="Whitehead S."/>
            <person name="Barrell B.G."/>
        </authorList>
    </citation>
    <scope>NUCLEOTIDE SEQUENCE [LARGE SCALE GENOMIC DNA]</scope>
    <source>
        <strain>ATCC 25618 / H37Rv</strain>
    </source>
</reference>
<reference key="2">
    <citation type="journal article" date="1993" name="Mol. Microbiol.">
        <title>The rpsL gene and streptomycin resistance in single and multiple drug-resistant strains of Mycobacterium tuberculosis.</title>
        <authorList>
            <person name="Nair J."/>
            <person name="Rouse D.A."/>
            <person name="Bai G.H."/>
            <person name="Morris S.L."/>
        </authorList>
    </citation>
    <scope>NUCLEOTIDE SEQUENCE [GENOMIC DNA] OF 1-13</scope>
    <source>
        <strain>ATCC 25618 / H37Rv</strain>
    </source>
</reference>
<reference key="3">
    <citation type="journal article" date="2011" name="Mol. Cell. Proteomics">
        <title>Proteogenomic analysis of Mycobacterium tuberculosis by high resolution mass spectrometry.</title>
        <authorList>
            <person name="Kelkar D.S."/>
            <person name="Kumar D."/>
            <person name="Kumar P."/>
            <person name="Balakrishnan L."/>
            <person name="Muthusamy B."/>
            <person name="Yadav A.K."/>
            <person name="Shrivastava P."/>
            <person name="Marimuthu A."/>
            <person name="Anand S."/>
            <person name="Sundaram H."/>
            <person name="Kingsbury R."/>
            <person name="Harsha H.C."/>
            <person name="Nair B."/>
            <person name="Prasad T.S."/>
            <person name="Chauhan D.S."/>
            <person name="Katoch K."/>
            <person name="Katoch V.M."/>
            <person name="Kumar P."/>
            <person name="Chaerkady R."/>
            <person name="Ramachandran S."/>
            <person name="Dash D."/>
            <person name="Pandey A."/>
        </authorList>
    </citation>
    <scope>IDENTIFICATION BY MASS SPECTROMETRY [LARGE SCALE ANALYSIS]</scope>
    <source>
        <strain>ATCC 25618 / H37Rv</strain>
    </source>
</reference>
<organism>
    <name type="scientific">Mycobacterium tuberculosis (strain ATCC 25618 / H37Rv)</name>
    <dbReference type="NCBI Taxonomy" id="83332"/>
    <lineage>
        <taxon>Bacteria</taxon>
        <taxon>Bacillati</taxon>
        <taxon>Actinomycetota</taxon>
        <taxon>Actinomycetes</taxon>
        <taxon>Mycobacteriales</taxon>
        <taxon>Mycobacteriaceae</taxon>
        <taxon>Mycobacterium</taxon>
        <taxon>Mycobacterium tuberculosis complex</taxon>
    </lineage>
</organism>
<protein>
    <recommendedName>
        <fullName evidence="1">Small ribosomal subunit protein uS7</fullName>
    </recommendedName>
    <alternativeName>
        <fullName evidence="2">30S ribosomal protein S7</fullName>
    </alternativeName>
</protein>
<dbReference type="EMBL" id="L08011">
    <property type="protein sequence ID" value="AAA66177.1"/>
    <property type="molecule type" value="Genomic_DNA"/>
</dbReference>
<dbReference type="EMBL" id="AL123456">
    <property type="protein sequence ID" value="CCP43426.1"/>
    <property type="molecule type" value="Genomic_DNA"/>
</dbReference>
<dbReference type="PIR" id="D70827">
    <property type="entry name" value="D70827"/>
</dbReference>
<dbReference type="RefSeq" id="NP_215197.1">
    <property type="nucleotide sequence ID" value="NC_000962.3"/>
</dbReference>
<dbReference type="RefSeq" id="WP_003403456.1">
    <property type="nucleotide sequence ID" value="NZ_NVQJ01000007.1"/>
</dbReference>
<dbReference type="PDB" id="5V93">
    <property type="method" value="EM"/>
    <property type="resolution" value="4.00 A"/>
    <property type="chains" value="g=1-156"/>
</dbReference>
<dbReference type="PDB" id="6JMK">
    <property type="method" value="X-ray"/>
    <property type="resolution" value="1.80 A"/>
    <property type="chains" value="A/B=1-156"/>
</dbReference>
<dbReference type="PDB" id="7KGB">
    <property type="method" value="EM"/>
    <property type="resolution" value="2.70 A"/>
    <property type="chains" value="g=1-156"/>
</dbReference>
<dbReference type="PDB" id="7MSC">
    <property type="method" value="EM"/>
    <property type="resolution" value="2.97 A"/>
    <property type="chains" value="g=1-156"/>
</dbReference>
<dbReference type="PDB" id="7MSH">
    <property type="method" value="EM"/>
    <property type="resolution" value="3.23 A"/>
    <property type="chains" value="g=1-156"/>
</dbReference>
<dbReference type="PDB" id="7MSM">
    <property type="method" value="EM"/>
    <property type="resolution" value="2.79 A"/>
    <property type="chains" value="g=1-156"/>
</dbReference>
<dbReference type="PDB" id="7MSZ">
    <property type="method" value="EM"/>
    <property type="resolution" value="3.10 A"/>
    <property type="chains" value="g=1-156"/>
</dbReference>
<dbReference type="PDB" id="7MT2">
    <property type="method" value="EM"/>
    <property type="resolution" value="2.76 A"/>
    <property type="chains" value="g=1-156"/>
</dbReference>
<dbReference type="PDB" id="7MT3">
    <property type="method" value="EM"/>
    <property type="resolution" value="2.80 A"/>
    <property type="chains" value="g=1-156"/>
</dbReference>
<dbReference type="PDB" id="7MT7">
    <property type="method" value="EM"/>
    <property type="resolution" value="2.71 A"/>
    <property type="chains" value="g=1-156"/>
</dbReference>
<dbReference type="PDB" id="7SFR">
    <property type="method" value="EM"/>
    <property type="resolution" value="2.60 A"/>
    <property type="chains" value="g=1-156"/>
</dbReference>
<dbReference type="PDBsum" id="5V93"/>
<dbReference type="PDBsum" id="6JMK"/>
<dbReference type="PDBsum" id="7KGB"/>
<dbReference type="PDBsum" id="7MSC"/>
<dbReference type="PDBsum" id="7MSH"/>
<dbReference type="PDBsum" id="7MSM"/>
<dbReference type="PDBsum" id="7MSZ"/>
<dbReference type="PDBsum" id="7MT2"/>
<dbReference type="PDBsum" id="7MT3"/>
<dbReference type="PDBsum" id="7MT7"/>
<dbReference type="PDBsum" id="7SFR"/>
<dbReference type="EMDB" id="EMD-22865"/>
<dbReference type="EMDB" id="EMD-23961"/>
<dbReference type="EMDB" id="EMD-23962"/>
<dbReference type="EMDB" id="EMD-23969"/>
<dbReference type="EMDB" id="EMD-23972"/>
<dbReference type="EMDB" id="EMD-23974"/>
<dbReference type="EMDB" id="EMD-23975"/>
<dbReference type="EMDB" id="EMD-23976"/>
<dbReference type="EMDB" id="EMD-8645"/>
<dbReference type="SMR" id="P9WH29"/>
<dbReference type="FunCoup" id="P9WH29">
    <property type="interactions" value="442"/>
</dbReference>
<dbReference type="STRING" id="83332.Rv0683"/>
<dbReference type="PaxDb" id="83332-Rv0683"/>
<dbReference type="GeneID" id="45424645"/>
<dbReference type="GeneID" id="888245"/>
<dbReference type="KEGG" id="mtu:Rv0683"/>
<dbReference type="KEGG" id="mtv:RVBD_0683"/>
<dbReference type="TubercuList" id="Rv0683"/>
<dbReference type="eggNOG" id="COG0049">
    <property type="taxonomic scope" value="Bacteria"/>
</dbReference>
<dbReference type="InParanoid" id="P9WH29"/>
<dbReference type="OrthoDB" id="9807653at2"/>
<dbReference type="PhylomeDB" id="P9WH29"/>
<dbReference type="PRO" id="PR:P9WH29"/>
<dbReference type="Proteomes" id="UP000001584">
    <property type="component" value="Chromosome"/>
</dbReference>
<dbReference type="GO" id="GO:0005829">
    <property type="term" value="C:cytosol"/>
    <property type="evidence" value="ECO:0007005"/>
    <property type="project" value="MTBBASE"/>
</dbReference>
<dbReference type="GO" id="GO:0022627">
    <property type="term" value="C:cytosolic small ribosomal subunit"/>
    <property type="evidence" value="ECO:0000318"/>
    <property type="project" value="GO_Central"/>
</dbReference>
<dbReference type="GO" id="GO:0009274">
    <property type="term" value="C:peptidoglycan-based cell wall"/>
    <property type="evidence" value="ECO:0007005"/>
    <property type="project" value="MTBBASE"/>
</dbReference>
<dbReference type="GO" id="GO:0005886">
    <property type="term" value="C:plasma membrane"/>
    <property type="evidence" value="ECO:0007005"/>
    <property type="project" value="MTBBASE"/>
</dbReference>
<dbReference type="GO" id="GO:0005840">
    <property type="term" value="C:ribosome"/>
    <property type="evidence" value="ECO:0000318"/>
    <property type="project" value="GO_Central"/>
</dbReference>
<dbReference type="GO" id="GO:0003729">
    <property type="term" value="F:mRNA binding"/>
    <property type="evidence" value="ECO:0000318"/>
    <property type="project" value="GO_Central"/>
</dbReference>
<dbReference type="GO" id="GO:0019843">
    <property type="term" value="F:rRNA binding"/>
    <property type="evidence" value="ECO:0000318"/>
    <property type="project" value="GO_Central"/>
</dbReference>
<dbReference type="GO" id="GO:0003735">
    <property type="term" value="F:structural constituent of ribosome"/>
    <property type="evidence" value="ECO:0000318"/>
    <property type="project" value="GO_Central"/>
</dbReference>
<dbReference type="GO" id="GO:0000049">
    <property type="term" value="F:tRNA binding"/>
    <property type="evidence" value="ECO:0007669"/>
    <property type="project" value="UniProtKB-UniRule"/>
</dbReference>
<dbReference type="GO" id="GO:0000028">
    <property type="term" value="P:ribosomal small subunit assembly"/>
    <property type="evidence" value="ECO:0000318"/>
    <property type="project" value="GO_Central"/>
</dbReference>
<dbReference type="GO" id="GO:0006412">
    <property type="term" value="P:translation"/>
    <property type="evidence" value="ECO:0000318"/>
    <property type="project" value="GO_Central"/>
</dbReference>
<dbReference type="CDD" id="cd14869">
    <property type="entry name" value="uS7_Bacteria"/>
    <property type="match status" value="1"/>
</dbReference>
<dbReference type="FunFam" id="1.10.455.10:FF:000001">
    <property type="entry name" value="30S ribosomal protein S7"/>
    <property type="match status" value="1"/>
</dbReference>
<dbReference type="Gene3D" id="1.10.455.10">
    <property type="entry name" value="Ribosomal protein S7 domain"/>
    <property type="match status" value="1"/>
</dbReference>
<dbReference type="HAMAP" id="MF_00480_B">
    <property type="entry name" value="Ribosomal_uS7_B"/>
    <property type="match status" value="1"/>
</dbReference>
<dbReference type="InterPro" id="IPR000235">
    <property type="entry name" value="Ribosomal_uS7"/>
</dbReference>
<dbReference type="InterPro" id="IPR005717">
    <property type="entry name" value="Ribosomal_uS7_bac/org-type"/>
</dbReference>
<dbReference type="InterPro" id="IPR020606">
    <property type="entry name" value="Ribosomal_uS7_CS"/>
</dbReference>
<dbReference type="InterPro" id="IPR023798">
    <property type="entry name" value="Ribosomal_uS7_dom"/>
</dbReference>
<dbReference type="InterPro" id="IPR036823">
    <property type="entry name" value="Ribosomal_uS7_dom_sf"/>
</dbReference>
<dbReference type="NCBIfam" id="TIGR01029">
    <property type="entry name" value="rpsG_bact"/>
    <property type="match status" value="1"/>
</dbReference>
<dbReference type="PANTHER" id="PTHR11205">
    <property type="entry name" value="RIBOSOMAL PROTEIN S7"/>
    <property type="match status" value="1"/>
</dbReference>
<dbReference type="Pfam" id="PF00177">
    <property type="entry name" value="Ribosomal_S7"/>
    <property type="match status" value="1"/>
</dbReference>
<dbReference type="PIRSF" id="PIRSF002122">
    <property type="entry name" value="RPS7p_RPS7a_RPS5e_RPS7o"/>
    <property type="match status" value="1"/>
</dbReference>
<dbReference type="SUPFAM" id="SSF47973">
    <property type="entry name" value="Ribosomal protein S7"/>
    <property type="match status" value="1"/>
</dbReference>
<dbReference type="PROSITE" id="PS00052">
    <property type="entry name" value="RIBOSOMAL_S7"/>
    <property type="match status" value="1"/>
</dbReference>
<evidence type="ECO:0000255" key="1">
    <source>
        <dbReference type="HAMAP-Rule" id="MF_00480"/>
    </source>
</evidence>
<evidence type="ECO:0000305" key="2"/>
<evidence type="ECO:0007829" key="3">
    <source>
        <dbReference type="PDB" id="6JMK"/>
    </source>
</evidence>
<name>RS7_MYCTU</name>
<accession>P9WH29</accession>
<accession>L0T4J5</accession>
<accession>P41194</accession>
<gene>
    <name evidence="1" type="primary">rpsG</name>
    <name evidence="1" type="synonym">rps7</name>
    <name type="ordered locus">Rv0683</name>
    <name type="ORF">MTV040.11</name>
</gene>
<keyword id="KW-0002">3D-structure</keyword>
<keyword id="KW-1185">Reference proteome</keyword>
<keyword id="KW-0687">Ribonucleoprotein</keyword>
<keyword id="KW-0689">Ribosomal protein</keyword>
<keyword id="KW-0694">RNA-binding</keyword>
<keyword id="KW-0699">rRNA-binding</keyword>
<keyword id="KW-0820">tRNA-binding</keyword>
<proteinExistence type="evidence at protein level"/>
<sequence length="156" mass="17600">MPRKGPAPKRPLVNDPVYGSQLVTQLVNKVLLKGKKSLAERIVYGALEQARDKTGTDPVITLKRALDNVKPALEVRSRRVGGATYQVPVEVRPDRSTTLALRWLVGYSRQRREKTMIERLANEILDASNGLGASVKRREDTHKMAEANRAFAHYRW</sequence>